<feature type="chain" id="PRO_0000252084" description="Polyadenylate-binding protein 2">
    <location>
        <begin position="1"/>
        <end position="296"/>
    </location>
</feature>
<feature type="domain" description="RRM" evidence="5">
    <location>
        <begin position="163"/>
        <end position="240"/>
    </location>
</feature>
<feature type="region of interest" description="Disordered" evidence="6">
    <location>
        <begin position="1"/>
        <end position="102"/>
    </location>
</feature>
<feature type="region of interest" description="Necessary for homooligomerization" evidence="2">
    <location>
        <begin position="146"/>
        <end position="296"/>
    </location>
</feature>
<feature type="coiled-coil region" evidence="4">
    <location>
        <begin position="107"/>
        <end position="141"/>
    </location>
</feature>
<feature type="compositionally biased region" description="Gly residues" evidence="6">
    <location>
        <begin position="19"/>
        <end position="31"/>
    </location>
</feature>
<feature type="compositionally biased region" description="Gly residues" evidence="6">
    <location>
        <begin position="71"/>
        <end position="82"/>
    </location>
</feature>
<feature type="compositionally biased region" description="Acidic residues" evidence="6">
    <location>
        <begin position="84"/>
        <end position="97"/>
    </location>
</feature>
<evidence type="ECO:0000250" key="1">
    <source>
        <dbReference type="UniProtKB" id="Q28165"/>
    </source>
</evidence>
<evidence type="ECO:0000250" key="2">
    <source>
        <dbReference type="UniProtKB" id="Q86U42"/>
    </source>
</evidence>
<evidence type="ECO:0000250" key="3">
    <source>
        <dbReference type="UniProtKB" id="Q9DDY9"/>
    </source>
</evidence>
<evidence type="ECO:0000255" key="4"/>
<evidence type="ECO:0000255" key="5">
    <source>
        <dbReference type="PROSITE-ProRule" id="PRU00176"/>
    </source>
</evidence>
<evidence type="ECO:0000256" key="6">
    <source>
        <dbReference type="SAM" id="MobiDB-lite"/>
    </source>
</evidence>
<evidence type="ECO:0000312" key="7">
    <source>
        <dbReference type="EMBL" id="CAJ82538.1"/>
    </source>
</evidence>
<keyword id="KW-0175">Coiled coil</keyword>
<keyword id="KW-0963">Cytoplasm</keyword>
<keyword id="KW-0507">mRNA processing</keyword>
<keyword id="KW-0539">Nucleus</keyword>
<keyword id="KW-1185">Reference proteome</keyword>
<keyword id="KW-0694">RNA-binding</keyword>
<comment type="function">
    <text evidence="1">Involved in the 3'-end formation of mRNA precursors (pre-mRNA) by the addition of a poly(A) tail of 200-250 nt to the upstream cleavage product. Stimulates poly(A) polymerase (PAPOLA) conferring processivity on the poly(A) tail elongation reaction and also controls the poly(A) tail length. Increases the affinity of poly(A) polymerase for RNA. Binds to poly(A) and to poly(G) with high affinity. May protect the poly(A) tail from degradation.</text>
</comment>
<comment type="subunit">
    <text evidence="2">Monomer and homooligomer. Binds RNA as a monomer and oligomerizes when bound to poly(A) (By similarity).</text>
</comment>
<comment type="subcellular location">
    <subcellularLocation>
        <location evidence="3">Nucleus</location>
    </subcellularLocation>
    <subcellularLocation>
        <location evidence="2">Cytoplasm</location>
    </subcellularLocation>
    <text evidence="2">Shuttles between the nucleus and the cytoplasm but predominantly found in the nucleus.</text>
</comment>
<comment type="domain">
    <text evidence="1">The RRM domain is essential for specific adenine bases recognition in the poly(A) tail but not sufficient for poly(A) binding.</text>
</comment>
<accession>Q6NVP7</accession>
<organism>
    <name type="scientific">Xenopus tropicalis</name>
    <name type="common">Western clawed frog</name>
    <name type="synonym">Silurana tropicalis</name>
    <dbReference type="NCBI Taxonomy" id="8364"/>
    <lineage>
        <taxon>Eukaryota</taxon>
        <taxon>Metazoa</taxon>
        <taxon>Chordata</taxon>
        <taxon>Craniata</taxon>
        <taxon>Vertebrata</taxon>
        <taxon>Euteleostomi</taxon>
        <taxon>Amphibia</taxon>
        <taxon>Batrachia</taxon>
        <taxon>Anura</taxon>
        <taxon>Pipoidea</taxon>
        <taxon>Pipidae</taxon>
        <taxon>Xenopodinae</taxon>
        <taxon>Xenopus</taxon>
        <taxon>Silurana</taxon>
    </lineage>
</organism>
<gene>
    <name evidence="1" type="primary">pabpn1</name>
    <name type="ORF">TGas130l12.1</name>
</gene>
<protein>
    <recommendedName>
        <fullName>Polyadenylate-binding protein 2</fullName>
        <shortName>PABP-2</shortName>
        <shortName>Poly(A)-binding protein 2</shortName>
    </recommendedName>
    <alternativeName>
        <fullName>Nuclear poly(A)-binding protein 1</fullName>
    </alternativeName>
    <alternativeName>
        <fullName>Poly(A)-binding protein II</fullName>
        <shortName>PABII</shortName>
    </alternativeName>
    <alternativeName>
        <fullName>Polyadenylate-binding nuclear protein 1</fullName>
    </alternativeName>
</protein>
<sequence>MAAVSSAASLRGADYENGLRGGAGPSGGGQDPGEDDPMGRGTLDLDLELLGQGRRSRRVGGRTAPGRRSGGRGGSGGGGAGGLEELEDEELEEEEPGELTGDQTIEDPELEAIKARVREMEEEAEKLKELQNEVEKQMNMSPPPGNAGPVIMSIEEKMEADARSIYVGNVDYGATAEELEAHFHGCGSVNRVTILCDKYTGHPKGFAYIEFSDKESVRTSLALDESLFRGRQIKVVPKRTNRPGISTTDRGFPRARYRARASSYSSRSRFYSGYTPRPRGRVYRGRARVTSWYTPY</sequence>
<dbReference type="EMBL" id="CR761856">
    <property type="protein sequence ID" value="CAJ82538.1"/>
    <property type="molecule type" value="mRNA"/>
</dbReference>
<dbReference type="EMBL" id="BC067958">
    <property type="protein sequence ID" value="AAH67958.1"/>
    <property type="molecule type" value="mRNA"/>
</dbReference>
<dbReference type="RefSeq" id="NP_001001230.1">
    <property type="nucleotide sequence ID" value="NM_001001230.1"/>
</dbReference>
<dbReference type="SMR" id="Q6NVP7"/>
<dbReference type="FunCoup" id="Q6NVP7">
    <property type="interactions" value="3409"/>
</dbReference>
<dbReference type="STRING" id="8364.ENSXETP00000036077"/>
<dbReference type="PaxDb" id="8364-ENSXETP00000031935"/>
<dbReference type="DNASU" id="407911"/>
<dbReference type="GeneID" id="407911"/>
<dbReference type="KEGG" id="xtr:407911"/>
<dbReference type="AGR" id="Xenbase:XB-GENE-1007049"/>
<dbReference type="CTD" id="8106"/>
<dbReference type="Xenbase" id="XB-GENE-1007049">
    <property type="gene designation" value="pabpn1"/>
</dbReference>
<dbReference type="eggNOG" id="KOG4209">
    <property type="taxonomic scope" value="Eukaryota"/>
</dbReference>
<dbReference type="HOGENOM" id="CLU_012062_23_1_1"/>
<dbReference type="InParanoid" id="Q6NVP7"/>
<dbReference type="OMA" id="PGHAERM"/>
<dbReference type="OrthoDB" id="4726at2759"/>
<dbReference type="PhylomeDB" id="Q6NVP7"/>
<dbReference type="TreeFam" id="TF105907"/>
<dbReference type="Proteomes" id="UP000008143">
    <property type="component" value="Chromosome 1"/>
</dbReference>
<dbReference type="GO" id="GO:0005737">
    <property type="term" value="C:cytoplasm"/>
    <property type="evidence" value="ECO:0000250"/>
    <property type="project" value="UniProtKB"/>
</dbReference>
<dbReference type="GO" id="GO:0042405">
    <property type="term" value="C:nuclear inclusion body"/>
    <property type="evidence" value="ECO:0000250"/>
    <property type="project" value="UniProtKB"/>
</dbReference>
<dbReference type="GO" id="GO:0005634">
    <property type="term" value="C:nucleus"/>
    <property type="evidence" value="ECO:0000250"/>
    <property type="project" value="UniProtKB"/>
</dbReference>
<dbReference type="GO" id="GO:1990904">
    <property type="term" value="C:ribonucleoprotein complex"/>
    <property type="evidence" value="ECO:0000250"/>
    <property type="project" value="UniProtKB"/>
</dbReference>
<dbReference type="GO" id="GO:0008143">
    <property type="term" value="F:poly(A) binding"/>
    <property type="evidence" value="ECO:0000250"/>
    <property type="project" value="UniProtKB"/>
</dbReference>
<dbReference type="GO" id="GO:0003723">
    <property type="term" value="F:RNA binding"/>
    <property type="evidence" value="ECO:0000250"/>
    <property type="project" value="UniProtKB"/>
</dbReference>
<dbReference type="GO" id="GO:0070063">
    <property type="term" value="F:RNA polymerase binding"/>
    <property type="evidence" value="ECO:0000250"/>
    <property type="project" value="UniProtKB"/>
</dbReference>
<dbReference type="GO" id="GO:0071222">
    <property type="term" value="P:cellular response to lipopolysaccharide"/>
    <property type="evidence" value="ECO:0000250"/>
    <property type="project" value="UniProtKB"/>
</dbReference>
<dbReference type="GO" id="GO:0000165">
    <property type="term" value="P:MAPK cascade"/>
    <property type="evidence" value="ECO:0000250"/>
    <property type="project" value="UniProtKB"/>
</dbReference>
<dbReference type="GO" id="GO:0031124">
    <property type="term" value="P:mRNA 3'-end processing"/>
    <property type="evidence" value="ECO:0000250"/>
    <property type="project" value="UniProtKB"/>
</dbReference>
<dbReference type="GO" id="GO:1904247">
    <property type="term" value="P:positive regulation of polynucleotide adenylyltransferase activity"/>
    <property type="evidence" value="ECO:0000250"/>
    <property type="project" value="UniProtKB"/>
</dbReference>
<dbReference type="CDD" id="cd12550">
    <property type="entry name" value="RRM_II_PABPN1"/>
    <property type="match status" value="1"/>
</dbReference>
<dbReference type="FunFam" id="3.30.70.330:FF:000311">
    <property type="entry name" value="polyadenylate-binding protein 2"/>
    <property type="match status" value="1"/>
</dbReference>
<dbReference type="Gene3D" id="3.30.70.330">
    <property type="match status" value="1"/>
</dbReference>
<dbReference type="InterPro" id="IPR012677">
    <property type="entry name" value="Nucleotide-bd_a/b_plait_sf"/>
</dbReference>
<dbReference type="InterPro" id="IPR035979">
    <property type="entry name" value="RBD_domain_sf"/>
</dbReference>
<dbReference type="InterPro" id="IPR000504">
    <property type="entry name" value="RRM_dom"/>
</dbReference>
<dbReference type="PANTHER" id="PTHR23236">
    <property type="entry name" value="EUKARYOTIC TRANSLATION INITIATION FACTOR 4B/4H"/>
    <property type="match status" value="1"/>
</dbReference>
<dbReference type="PANTHER" id="PTHR23236:SF16">
    <property type="entry name" value="POLYADENYLATE-BINDING PROTEIN 2"/>
    <property type="match status" value="1"/>
</dbReference>
<dbReference type="Pfam" id="PF00076">
    <property type="entry name" value="RRM_1"/>
    <property type="match status" value="1"/>
</dbReference>
<dbReference type="SMART" id="SM00360">
    <property type="entry name" value="RRM"/>
    <property type="match status" value="1"/>
</dbReference>
<dbReference type="SUPFAM" id="SSF54928">
    <property type="entry name" value="RNA-binding domain, RBD"/>
    <property type="match status" value="1"/>
</dbReference>
<dbReference type="PROSITE" id="PS50102">
    <property type="entry name" value="RRM"/>
    <property type="match status" value="1"/>
</dbReference>
<reference evidence="7" key="1">
    <citation type="submission" date="2006-03" db="EMBL/GenBank/DDBJ databases">
        <authorList>
            <consortium name="Sanger Xenopus tropicalis EST/cDNA project"/>
        </authorList>
    </citation>
    <scope>NUCLEOTIDE SEQUENCE [LARGE SCALE MRNA]</scope>
    <source>
        <tissue>Gastrula</tissue>
    </source>
</reference>
<reference evidence="7" key="2">
    <citation type="submission" date="2004-03" db="EMBL/GenBank/DDBJ databases">
        <authorList>
            <consortium name="NIH - Xenopus Gene Collection (XGC) project"/>
        </authorList>
    </citation>
    <scope>NUCLEOTIDE SEQUENCE [LARGE SCALE MRNA]</scope>
    <source>
        <tissue>Tail bud</tissue>
    </source>
</reference>
<proteinExistence type="evidence at transcript level"/>
<name>PABP2_XENTR</name>